<sequence length="245" mass="27908">MPYRKYREKKYEAKYREAFRAFQQKLGITFTNEKLLIQAFTHSSYVNEHRKKPHEDNERLEFLGDAVLELTVSQYLFQKYPTMSEGELTKLRAAIVCEPSLVRFANELSFGSLVLLGKGEEMTGGRERPALLADVFEAFIGALYLDQGLDTVWGFLKEIVYPKINEGAFSHVMDYKSQLQELIQRDGSGNIEYQILQEKGPAHNREFVSRVTLNSVALGLGSGKSKKEAEQQAAAEALRKLKEQS</sequence>
<evidence type="ECO:0000255" key="1">
    <source>
        <dbReference type="HAMAP-Rule" id="MF_00104"/>
    </source>
</evidence>
<keyword id="KW-0963">Cytoplasm</keyword>
<keyword id="KW-0255">Endonuclease</keyword>
<keyword id="KW-0378">Hydrolase</keyword>
<keyword id="KW-0460">Magnesium</keyword>
<keyword id="KW-0479">Metal-binding</keyword>
<keyword id="KW-0507">mRNA processing</keyword>
<keyword id="KW-0540">Nuclease</keyword>
<keyword id="KW-0694">RNA-binding</keyword>
<keyword id="KW-0698">rRNA processing</keyword>
<keyword id="KW-0699">rRNA-binding</keyword>
<keyword id="KW-0819">tRNA processing</keyword>
<dbReference type="EC" id="3.1.26.3" evidence="1"/>
<dbReference type="EMBL" id="CP000764">
    <property type="protein sequence ID" value="ABS22737.1"/>
    <property type="molecule type" value="Genomic_DNA"/>
</dbReference>
<dbReference type="SMR" id="A7GRH9"/>
<dbReference type="STRING" id="315749.Bcer98_2501"/>
<dbReference type="GeneID" id="33897756"/>
<dbReference type="KEGG" id="bcy:Bcer98_2501"/>
<dbReference type="eggNOG" id="COG0571">
    <property type="taxonomic scope" value="Bacteria"/>
</dbReference>
<dbReference type="HOGENOM" id="CLU_000907_1_3_9"/>
<dbReference type="OrthoDB" id="9805026at2"/>
<dbReference type="Proteomes" id="UP000002300">
    <property type="component" value="Chromosome"/>
</dbReference>
<dbReference type="GO" id="GO:0005737">
    <property type="term" value="C:cytoplasm"/>
    <property type="evidence" value="ECO:0007669"/>
    <property type="project" value="UniProtKB-SubCell"/>
</dbReference>
<dbReference type="GO" id="GO:0003725">
    <property type="term" value="F:double-stranded RNA binding"/>
    <property type="evidence" value="ECO:0007669"/>
    <property type="project" value="TreeGrafter"/>
</dbReference>
<dbReference type="GO" id="GO:0046872">
    <property type="term" value="F:metal ion binding"/>
    <property type="evidence" value="ECO:0007669"/>
    <property type="project" value="UniProtKB-KW"/>
</dbReference>
<dbReference type="GO" id="GO:0004525">
    <property type="term" value="F:ribonuclease III activity"/>
    <property type="evidence" value="ECO:0007669"/>
    <property type="project" value="UniProtKB-UniRule"/>
</dbReference>
<dbReference type="GO" id="GO:0019843">
    <property type="term" value="F:rRNA binding"/>
    <property type="evidence" value="ECO:0007669"/>
    <property type="project" value="UniProtKB-KW"/>
</dbReference>
<dbReference type="GO" id="GO:0006397">
    <property type="term" value="P:mRNA processing"/>
    <property type="evidence" value="ECO:0007669"/>
    <property type="project" value="UniProtKB-UniRule"/>
</dbReference>
<dbReference type="GO" id="GO:0010468">
    <property type="term" value="P:regulation of gene expression"/>
    <property type="evidence" value="ECO:0007669"/>
    <property type="project" value="TreeGrafter"/>
</dbReference>
<dbReference type="GO" id="GO:0006364">
    <property type="term" value="P:rRNA processing"/>
    <property type="evidence" value="ECO:0007669"/>
    <property type="project" value="UniProtKB-UniRule"/>
</dbReference>
<dbReference type="GO" id="GO:0008033">
    <property type="term" value="P:tRNA processing"/>
    <property type="evidence" value="ECO:0007669"/>
    <property type="project" value="UniProtKB-KW"/>
</dbReference>
<dbReference type="CDD" id="cd10845">
    <property type="entry name" value="DSRM_RNAse_III_family"/>
    <property type="match status" value="1"/>
</dbReference>
<dbReference type="CDD" id="cd00593">
    <property type="entry name" value="RIBOc"/>
    <property type="match status" value="1"/>
</dbReference>
<dbReference type="FunFam" id="1.10.1520.10:FF:000001">
    <property type="entry name" value="Ribonuclease 3"/>
    <property type="match status" value="1"/>
</dbReference>
<dbReference type="FunFam" id="3.30.160.20:FF:000003">
    <property type="entry name" value="Ribonuclease 3"/>
    <property type="match status" value="1"/>
</dbReference>
<dbReference type="Gene3D" id="3.30.160.20">
    <property type="match status" value="1"/>
</dbReference>
<dbReference type="Gene3D" id="1.10.1520.10">
    <property type="entry name" value="Ribonuclease III domain"/>
    <property type="match status" value="1"/>
</dbReference>
<dbReference type="HAMAP" id="MF_00104">
    <property type="entry name" value="RNase_III"/>
    <property type="match status" value="1"/>
</dbReference>
<dbReference type="InterPro" id="IPR014720">
    <property type="entry name" value="dsRBD_dom"/>
</dbReference>
<dbReference type="InterPro" id="IPR011907">
    <property type="entry name" value="RNase_III"/>
</dbReference>
<dbReference type="InterPro" id="IPR000999">
    <property type="entry name" value="RNase_III_dom"/>
</dbReference>
<dbReference type="InterPro" id="IPR036389">
    <property type="entry name" value="RNase_III_sf"/>
</dbReference>
<dbReference type="NCBIfam" id="TIGR02191">
    <property type="entry name" value="RNaseIII"/>
    <property type="match status" value="1"/>
</dbReference>
<dbReference type="PANTHER" id="PTHR11207:SF0">
    <property type="entry name" value="RIBONUCLEASE 3"/>
    <property type="match status" value="1"/>
</dbReference>
<dbReference type="PANTHER" id="PTHR11207">
    <property type="entry name" value="RIBONUCLEASE III"/>
    <property type="match status" value="1"/>
</dbReference>
<dbReference type="Pfam" id="PF00035">
    <property type="entry name" value="dsrm"/>
    <property type="match status" value="1"/>
</dbReference>
<dbReference type="Pfam" id="PF14622">
    <property type="entry name" value="Ribonucleas_3_3"/>
    <property type="match status" value="1"/>
</dbReference>
<dbReference type="SMART" id="SM00358">
    <property type="entry name" value="DSRM"/>
    <property type="match status" value="1"/>
</dbReference>
<dbReference type="SMART" id="SM00535">
    <property type="entry name" value="RIBOc"/>
    <property type="match status" value="1"/>
</dbReference>
<dbReference type="SUPFAM" id="SSF54768">
    <property type="entry name" value="dsRNA-binding domain-like"/>
    <property type="match status" value="1"/>
</dbReference>
<dbReference type="SUPFAM" id="SSF69065">
    <property type="entry name" value="RNase III domain-like"/>
    <property type="match status" value="1"/>
</dbReference>
<dbReference type="PROSITE" id="PS50137">
    <property type="entry name" value="DS_RBD"/>
    <property type="match status" value="1"/>
</dbReference>
<dbReference type="PROSITE" id="PS00517">
    <property type="entry name" value="RNASE_3_1"/>
    <property type="match status" value="1"/>
</dbReference>
<dbReference type="PROSITE" id="PS50142">
    <property type="entry name" value="RNASE_3_2"/>
    <property type="match status" value="1"/>
</dbReference>
<gene>
    <name evidence="1" type="primary">rnc</name>
    <name type="ordered locus">Bcer98_2501</name>
</gene>
<proteinExistence type="inferred from homology"/>
<comment type="function">
    <text evidence="1">Digests double-stranded RNA. Involved in the processing of primary rRNA transcript to yield the immediate precursors to the large and small rRNAs (23S and 16S). Processes some mRNAs, and tRNAs when they are encoded in the rRNA operon. Processes pre-crRNA and tracrRNA of type II CRISPR loci if present in the organism.</text>
</comment>
<comment type="catalytic activity">
    <reaction evidence="1">
        <text>Endonucleolytic cleavage to 5'-phosphomonoester.</text>
        <dbReference type="EC" id="3.1.26.3"/>
    </reaction>
</comment>
<comment type="cofactor">
    <cofactor evidence="1">
        <name>Mg(2+)</name>
        <dbReference type="ChEBI" id="CHEBI:18420"/>
    </cofactor>
</comment>
<comment type="subunit">
    <text evidence="1">Homodimer.</text>
</comment>
<comment type="subcellular location">
    <subcellularLocation>
        <location evidence="1">Cytoplasm</location>
    </subcellularLocation>
</comment>
<comment type="similarity">
    <text evidence="1">Belongs to the ribonuclease III family.</text>
</comment>
<name>RNC_BACCN</name>
<organism>
    <name type="scientific">Bacillus cytotoxicus (strain DSM 22905 / CIP 110041 / 391-98 / NVH 391-98)</name>
    <dbReference type="NCBI Taxonomy" id="315749"/>
    <lineage>
        <taxon>Bacteria</taxon>
        <taxon>Bacillati</taxon>
        <taxon>Bacillota</taxon>
        <taxon>Bacilli</taxon>
        <taxon>Bacillales</taxon>
        <taxon>Bacillaceae</taxon>
        <taxon>Bacillus</taxon>
        <taxon>Bacillus cereus group</taxon>
    </lineage>
</organism>
<reference key="1">
    <citation type="journal article" date="2008" name="Chem. Biol. Interact.">
        <title>Extending the Bacillus cereus group genomics to putative food-borne pathogens of different toxicity.</title>
        <authorList>
            <person name="Lapidus A."/>
            <person name="Goltsman E."/>
            <person name="Auger S."/>
            <person name="Galleron N."/>
            <person name="Segurens B."/>
            <person name="Dossat C."/>
            <person name="Land M.L."/>
            <person name="Broussolle V."/>
            <person name="Brillard J."/>
            <person name="Guinebretiere M.-H."/>
            <person name="Sanchis V."/>
            <person name="Nguen-the C."/>
            <person name="Lereclus D."/>
            <person name="Richardson P."/>
            <person name="Wincker P."/>
            <person name="Weissenbach J."/>
            <person name="Ehrlich S.D."/>
            <person name="Sorokin A."/>
        </authorList>
    </citation>
    <scope>NUCLEOTIDE SEQUENCE [LARGE SCALE GENOMIC DNA]</scope>
    <source>
        <strain>DSM 22905 / CIP 110041 / 391-98 / NVH 391-98</strain>
    </source>
</reference>
<feature type="chain" id="PRO_1000075723" description="Ribonuclease 3">
    <location>
        <begin position="1"/>
        <end position="245"/>
    </location>
</feature>
<feature type="domain" description="RNase III" evidence="1">
    <location>
        <begin position="19"/>
        <end position="148"/>
    </location>
</feature>
<feature type="domain" description="DRBM" evidence="1">
    <location>
        <begin position="174"/>
        <end position="243"/>
    </location>
</feature>
<feature type="active site" evidence="1">
    <location>
        <position position="65"/>
    </location>
</feature>
<feature type="active site" evidence="1">
    <location>
        <position position="137"/>
    </location>
</feature>
<feature type="binding site" evidence="1">
    <location>
        <position position="61"/>
    </location>
    <ligand>
        <name>Mg(2+)</name>
        <dbReference type="ChEBI" id="CHEBI:18420"/>
    </ligand>
</feature>
<feature type="binding site" evidence="1">
    <location>
        <position position="134"/>
    </location>
    <ligand>
        <name>Mg(2+)</name>
        <dbReference type="ChEBI" id="CHEBI:18420"/>
    </ligand>
</feature>
<feature type="binding site" evidence="1">
    <location>
        <position position="137"/>
    </location>
    <ligand>
        <name>Mg(2+)</name>
        <dbReference type="ChEBI" id="CHEBI:18420"/>
    </ligand>
</feature>
<protein>
    <recommendedName>
        <fullName evidence="1">Ribonuclease 3</fullName>
        <ecNumber evidence="1">3.1.26.3</ecNumber>
    </recommendedName>
    <alternativeName>
        <fullName evidence="1">Ribonuclease III</fullName>
        <shortName evidence="1">RNase III</shortName>
    </alternativeName>
</protein>
<accession>A7GRH9</accession>